<comment type="function">
    <text evidence="1">Responsible for the release of ribosomes from messenger RNA at the termination of protein biosynthesis. May increase the efficiency of translation by recycling ribosomes from one round of translation to another.</text>
</comment>
<comment type="subcellular location">
    <subcellularLocation>
        <location evidence="1">Cytoplasm</location>
    </subcellularLocation>
</comment>
<comment type="similarity">
    <text evidence="1">Belongs to the RRF family.</text>
</comment>
<protein>
    <recommendedName>
        <fullName evidence="1">Ribosome-recycling factor</fullName>
        <shortName evidence="1">RRF</shortName>
    </recommendedName>
    <alternativeName>
        <fullName evidence="1">Ribosome-releasing factor</fullName>
    </alternativeName>
</protein>
<evidence type="ECO:0000255" key="1">
    <source>
        <dbReference type="HAMAP-Rule" id="MF_00040"/>
    </source>
</evidence>
<proteinExistence type="inferred from homology"/>
<reference key="1">
    <citation type="journal article" date="2006" name="Proc. Natl. Acad. Sci. U.S.A.">
        <title>Molecular genetic anatomy of inter- and intraserotype variation in the human bacterial pathogen group A Streptococcus.</title>
        <authorList>
            <person name="Beres S.B."/>
            <person name="Richter E.W."/>
            <person name="Nagiec M.J."/>
            <person name="Sumby P."/>
            <person name="Porcella S.F."/>
            <person name="DeLeo F.R."/>
            <person name="Musser J.M."/>
        </authorList>
    </citation>
    <scope>NUCLEOTIDE SEQUENCE [LARGE SCALE GENOMIC DNA]</scope>
    <source>
        <strain>MGAS9429</strain>
    </source>
</reference>
<gene>
    <name evidence="1" type="primary">frr</name>
    <name type="ordered locus">MGAS9429_Spy0380</name>
</gene>
<keyword id="KW-0963">Cytoplasm</keyword>
<keyword id="KW-0648">Protein biosynthesis</keyword>
<accession>Q1JN31</accession>
<sequence>MANAIIETAKERFAQSHQSLSREYASIRAGRANASLLDRIQVDYYGAPTPLNQLASITVPEARVLLISPFDKSSIKDIERALNASDLGITPANDGSVIRLVIPALTEETRKELAKEVKKVGENAKIAIRNIRRDAMDDAKKQEKAKEITEDELKTLEKDIQKATDDAIKEIDRMTAEKEKELLSV</sequence>
<name>RRF_STRPC</name>
<feature type="chain" id="PRO_1000003284" description="Ribosome-recycling factor">
    <location>
        <begin position="1"/>
        <end position="185"/>
    </location>
</feature>
<dbReference type="EMBL" id="CP000259">
    <property type="protein sequence ID" value="ABF31568.1"/>
    <property type="molecule type" value="Genomic_DNA"/>
</dbReference>
<dbReference type="RefSeq" id="WP_002985763.1">
    <property type="nucleotide sequence ID" value="NC_008021.1"/>
</dbReference>
<dbReference type="SMR" id="Q1JN31"/>
<dbReference type="GeneID" id="69901299"/>
<dbReference type="KEGG" id="spk:MGAS9429_Spy0380"/>
<dbReference type="HOGENOM" id="CLU_073981_2_0_9"/>
<dbReference type="Proteomes" id="UP000002433">
    <property type="component" value="Chromosome"/>
</dbReference>
<dbReference type="GO" id="GO:0005737">
    <property type="term" value="C:cytoplasm"/>
    <property type="evidence" value="ECO:0007669"/>
    <property type="project" value="UniProtKB-SubCell"/>
</dbReference>
<dbReference type="GO" id="GO:0043023">
    <property type="term" value="F:ribosomal large subunit binding"/>
    <property type="evidence" value="ECO:0007669"/>
    <property type="project" value="TreeGrafter"/>
</dbReference>
<dbReference type="GO" id="GO:0006415">
    <property type="term" value="P:translational termination"/>
    <property type="evidence" value="ECO:0007669"/>
    <property type="project" value="UniProtKB-UniRule"/>
</dbReference>
<dbReference type="CDD" id="cd00520">
    <property type="entry name" value="RRF"/>
    <property type="match status" value="1"/>
</dbReference>
<dbReference type="FunFam" id="1.10.132.20:FF:000001">
    <property type="entry name" value="Ribosome-recycling factor"/>
    <property type="match status" value="1"/>
</dbReference>
<dbReference type="FunFam" id="3.30.1360.40:FF:000001">
    <property type="entry name" value="Ribosome-recycling factor"/>
    <property type="match status" value="1"/>
</dbReference>
<dbReference type="Gene3D" id="3.30.1360.40">
    <property type="match status" value="1"/>
</dbReference>
<dbReference type="Gene3D" id="1.10.132.20">
    <property type="entry name" value="Ribosome-recycling factor"/>
    <property type="match status" value="1"/>
</dbReference>
<dbReference type="HAMAP" id="MF_00040">
    <property type="entry name" value="RRF"/>
    <property type="match status" value="1"/>
</dbReference>
<dbReference type="InterPro" id="IPR002661">
    <property type="entry name" value="Ribosome_recyc_fac"/>
</dbReference>
<dbReference type="InterPro" id="IPR023584">
    <property type="entry name" value="Ribosome_recyc_fac_dom"/>
</dbReference>
<dbReference type="InterPro" id="IPR036191">
    <property type="entry name" value="RRF_sf"/>
</dbReference>
<dbReference type="NCBIfam" id="TIGR00496">
    <property type="entry name" value="frr"/>
    <property type="match status" value="1"/>
</dbReference>
<dbReference type="PANTHER" id="PTHR20982:SF3">
    <property type="entry name" value="MITOCHONDRIAL RIBOSOME RECYCLING FACTOR PSEUDO 1"/>
    <property type="match status" value="1"/>
</dbReference>
<dbReference type="PANTHER" id="PTHR20982">
    <property type="entry name" value="RIBOSOME RECYCLING FACTOR"/>
    <property type="match status" value="1"/>
</dbReference>
<dbReference type="Pfam" id="PF01765">
    <property type="entry name" value="RRF"/>
    <property type="match status" value="1"/>
</dbReference>
<dbReference type="SUPFAM" id="SSF55194">
    <property type="entry name" value="Ribosome recycling factor, RRF"/>
    <property type="match status" value="1"/>
</dbReference>
<organism>
    <name type="scientific">Streptococcus pyogenes serotype M12 (strain MGAS9429)</name>
    <dbReference type="NCBI Taxonomy" id="370551"/>
    <lineage>
        <taxon>Bacteria</taxon>
        <taxon>Bacillati</taxon>
        <taxon>Bacillota</taxon>
        <taxon>Bacilli</taxon>
        <taxon>Lactobacillales</taxon>
        <taxon>Streptococcaceae</taxon>
        <taxon>Streptococcus</taxon>
    </lineage>
</organism>